<accession>A5PLF5</accession>
<organism>
    <name type="scientific">Danio rerio</name>
    <name type="common">Zebrafish</name>
    <name type="synonym">Brachydanio rerio</name>
    <dbReference type="NCBI Taxonomy" id="7955"/>
    <lineage>
        <taxon>Eukaryota</taxon>
        <taxon>Metazoa</taxon>
        <taxon>Chordata</taxon>
        <taxon>Craniata</taxon>
        <taxon>Vertebrata</taxon>
        <taxon>Euteleostomi</taxon>
        <taxon>Actinopterygii</taxon>
        <taxon>Neopterygii</taxon>
        <taxon>Teleostei</taxon>
        <taxon>Ostariophysi</taxon>
        <taxon>Cypriniformes</taxon>
        <taxon>Danionidae</taxon>
        <taxon>Danioninae</taxon>
        <taxon>Danio</taxon>
    </lineage>
</organism>
<feature type="signal peptide" evidence="1">
    <location>
        <begin position="1"/>
        <end position="21"/>
    </location>
</feature>
<feature type="chain" id="PRO_0000298991" description="TM2 domain-containing protein 3">
    <location>
        <begin position="22"/>
        <end position="244"/>
    </location>
</feature>
<feature type="topological domain" description="Extracellular" evidence="3">
    <location>
        <begin position="22"/>
        <end position="176"/>
    </location>
</feature>
<feature type="transmembrane region" description="Helical" evidence="1">
    <location>
        <begin position="177"/>
        <end position="197"/>
    </location>
</feature>
<feature type="topological domain" description="Cytoplasmic" evidence="3">
    <location>
        <begin position="198"/>
        <end position="212"/>
    </location>
</feature>
<feature type="transmembrane region" description="Helical" evidence="1">
    <location>
        <begin position="213"/>
        <end position="233"/>
    </location>
</feature>
<feature type="topological domain" description="Extracellular" evidence="3">
    <location>
        <begin position="234"/>
        <end position="244"/>
    </location>
</feature>
<feature type="domain" description="TM2" evidence="1">
    <location>
        <begin position="180"/>
        <end position="227"/>
    </location>
</feature>
<feature type="glycosylation site" description="N-linked (GlcNAc...) asparagine" evidence="2">
    <location>
        <position position="86"/>
    </location>
</feature>
<feature type="glycosylation site" description="N-linked (GlcNAc...) asparagine" evidence="2">
    <location>
        <position position="94"/>
    </location>
</feature>
<feature type="glycosylation site" description="N-linked (GlcNAc...) asparagine" evidence="2">
    <location>
        <position position="115"/>
    </location>
</feature>
<feature type="glycosylation site" description="N-linked (GlcNAc...) asparagine" evidence="2">
    <location>
        <position position="137"/>
    </location>
</feature>
<feature type="glycosylation site" description="N-linked (GlcNAc...) asparagine" evidence="2">
    <location>
        <position position="152"/>
    </location>
</feature>
<feature type="glycosylation site" description="N-linked (GlcNAc...) asparagine" evidence="2">
    <location>
        <position position="176"/>
    </location>
</feature>
<protein>
    <recommendedName>
        <fullName>TM2 domain-containing protein 3</fullName>
    </recommendedName>
</protein>
<keyword id="KW-0325">Glycoprotein</keyword>
<keyword id="KW-0472">Membrane</keyword>
<keyword id="KW-1185">Reference proteome</keyword>
<keyword id="KW-0732">Signal</keyword>
<keyword id="KW-0812">Transmembrane</keyword>
<keyword id="KW-1133">Transmembrane helix</keyword>
<proteinExistence type="evidence at transcript level"/>
<dbReference type="EMBL" id="BC142884">
    <property type="protein sequence ID" value="AAI42885.1"/>
    <property type="status" value="ALT_INIT"/>
    <property type="molecule type" value="mRNA"/>
</dbReference>
<dbReference type="RefSeq" id="NP_001092734.1">
    <property type="nucleotide sequence ID" value="NM_001099264.1"/>
</dbReference>
<dbReference type="FunCoup" id="A5PLF5">
    <property type="interactions" value="915"/>
</dbReference>
<dbReference type="STRING" id="7955.ENSDARP00000122047"/>
<dbReference type="GlyCosmos" id="A5PLF5">
    <property type="glycosylation" value="6 sites, No reported glycans"/>
</dbReference>
<dbReference type="PaxDb" id="7955-ENSDARP00000122047"/>
<dbReference type="GeneID" id="100093711"/>
<dbReference type="KEGG" id="dre:100093711"/>
<dbReference type="AGR" id="ZFIN:ZDB-GENE-070620-20"/>
<dbReference type="CTD" id="80213"/>
<dbReference type="ZFIN" id="ZDB-GENE-070620-20">
    <property type="gene designation" value="tm2d3"/>
</dbReference>
<dbReference type="eggNOG" id="KOG4272">
    <property type="taxonomic scope" value="Eukaryota"/>
</dbReference>
<dbReference type="InParanoid" id="A5PLF5"/>
<dbReference type="OrthoDB" id="10257855at2759"/>
<dbReference type="PRO" id="PR:A5PLF5"/>
<dbReference type="Proteomes" id="UP000000437">
    <property type="component" value="Chromosome 18"/>
</dbReference>
<dbReference type="GO" id="GO:0016020">
    <property type="term" value="C:membrane"/>
    <property type="evidence" value="ECO:0007669"/>
    <property type="project" value="UniProtKB-SubCell"/>
</dbReference>
<dbReference type="InterPro" id="IPR007829">
    <property type="entry name" value="TM2"/>
</dbReference>
<dbReference type="InterPro" id="IPR050932">
    <property type="entry name" value="TM2D1-3-like"/>
</dbReference>
<dbReference type="PANTHER" id="PTHR21016">
    <property type="entry name" value="BETA-AMYLOID BINDING PROTEIN-RELATED"/>
    <property type="match status" value="1"/>
</dbReference>
<dbReference type="PANTHER" id="PTHR21016:SF7">
    <property type="entry name" value="TM2 DOMAIN-CONTAINING PROTEIN 3"/>
    <property type="match status" value="1"/>
</dbReference>
<dbReference type="Pfam" id="PF05154">
    <property type="entry name" value="TM2"/>
    <property type="match status" value="1"/>
</dbReference>
<name>TM2D3_DANRE</name>
<gene>
    <name type="primary">tm2d3</name>
    <name type="ORF">zgc:165591</name>
</gene>
<sequence>MSSYIMLVLLLLDIYSSCVDGYLSSPHVGQDPPYLAQQKSVMSSPVALTASSASPVVTDNYVSKCPSGGLCSKLPADCIICALHHNCSYGRPHNYTCRPRAGVHCVSDQGERQQNFTLSLLCRFCFQLDASQYRCSNSSDCMTVSCPRRRYNASCEVLEHVHCLGKRVFQKRLFCNWTGGYKWSTALALSITLGGFGADRFYLGQWREGLGKLFSFGGLGIWTLIDVLLIGVGYVGPADGSLYI</sequence>
<comment type="subcellular location">
    <subcellularLocation>
        <location evidence="3">Membrane</location>
        <topology evidence="3">Multi-pass membrane protein</topology>
    </subcellularLocation>
</comment>
<comment type="similarity">
    <text evidence="3">Belongs to the TM2 family.</text>
</comment>
<comment type="sequence caution" evidence="3">
    <conflict type="erroneous initiation">
        <sequence resource="EMBL-CDS" id="AAI42885"/>
    </conflict>
</comment>
<evidence type="ECO:0000255" key="1"/>
<evidence type="ECO:0000255" key="2">
    <source>
        <dbReference type="PROSITE-ProRule" id="PRU00498"/>
    </source>
</evidence>
<evidence type="ECO:0000305" key="3"/>
<reference key="1">
    <citation type="submission" date="2007-06" db="EMBL/GenBank/DDBJ databases">
        <authorList>
            <consortium name="NIH - Zebrafish Gene Collection (ZGC) project"/>
        </authorList>
    </citation>
    <scope>NUCLEOTIDE SEQUENCE [LARGE SCALE MRNA]</scope>
    <source>
        <tissue>Ovary</tissue>
    </source>
</reference>